<sequence length="250" mass="29328">MSQAAETLDGWYSLHLFYAVDWASLRLAPKDERDALVTELQSFLENTATVRSSKSGDQAIYNITGQKADLLLWFLRPEMKSLNHIENEFNKLRIADFLIPTYSYVSVIELSNYLAGKSDEDPYENPHIKARLYPELPHSDYICFYPMNKRRNETYNWYMLTMEERQKLMYDHGMIGRKYAGKIKQFITGSVGFDDFEWGVTLFSDDVLQFKKIVYEMRFDETTARYGEFGSFFVGHIINTNEFDQFFAIS</sequence>
<evidence type="ECO:0000255" key="1">
    <source>
        <dbReference type="HAMAP-Rule" id="MF_01442"/>
    </source>
</evidence>
<feature type="chain" id="PRO_0000294047" description="Coproheme decarboxylase">
    <location>
        <begin position="1"/>
        <end position="250"/>
    </location>
</feature>
<feature type="active site" evidence="1">
    <location>
        <position position="145"/>
    </location>
</feature>
<feature type="binding site" evidence="1">
    <location>
        <position position="131"/>
    </location>
    <ligand>
        <name>Fe-coproporphyrin III</name>
        <dbReference type="ChEBI" id="CHEBI:68438"/>
    </ligand>
</feature>
<feature type="binding site" evidence="1">
    <location>
        <begin position="145"/>
        <end position="149"/>
    </location>
    <ligand>
        <name>Fe-coproporphyrin III</name>
        <dbReference type="ChEBI" id="CHEBI:68438"/>
    </ligand>
</feature>
<feature type="binding site" description="axial binding residue" evidence="1">
    <location>
        <position position="172"/>
    </location>
    <ligand>
        <name>Fe-coproporphyrin III</name>
        <dbReference type="ChEBI" id="CHEBI:68438"/>
    </ligand>
    <ligandPart>
        <name>Fe</name>
        <dbReference type="ChEBI" id="CHEBI:18248"/>
    </ligandPart>
</feature>
<feature type="binding site" evidence="1">
    <location>
        <position position="185"/>
    </location>
    <ligand>
        <name>Fe-coproporphyrin III</name>
        <dbReference type="ChEBI" id="CHEBI:68438"/>
    </ligand>
</feature>
<proteinExistence type="inferred from homology"/>
<name>CHDC_STAAB</name>
<comment type="function">
    <text evidence="1">Involved in coproporphyrin-dependent heme b biosynthesis. Catalyzes the decarboxylation of Fe-coproporphyrin III (coproheme) to heme b (protoheme IX), the last step of the pathway. The reaction occurs in a stepwise manner with a three-propionate intermediate.</text>
</comment>
<comment type="catalytic activity">
    <reaction evidence="1">
        <text>Fe-coproporphyrin III + 2 H2O2 + 2 H(+) = heme b + 2 CO2 + 4 H2O</text>
        <dbReference type="Rhea" id="RHEA:56516"/>
        <dbReference type="ChEBI" id="CHEBI:15377"/>
        <dbReference type="ChEBI" id="CHEBI:15378"/>
        <dbReference type="ChEBI" id="CHEBI:16240"/>
        <dbReference type="ChEBI" id="CHEBI:16526"/>
        <dbReference type="ChEBI" id="CHEBI:60344"/>
        <dbReference type="ChEBI" id="CHEBI:68438"/>
        <dbReference type="EC" id="1.3.98.5"/>
    </reaction>
    <physiologicalReaction direction="left-to-right" evidence="1">
        <dbReference type="Rhea" id="RHEA:56517"/>
    </physiologicalReaction>
</comment>
<comment type="catalytic activity">
    <reaction evidence="1">
        <text>Fe-coproporphyrin III + H2O2 + H(+) = harderoheme III + CO2 + 2 H2O</text>
        <dbReference type="Rhea" id="RHEA:57940"/>
        <dbReference type="ChEBI" id="CHEBI:15377"/>
        <dbReference type="ChEBI" id="CHEBI:15378"/>
        <dbReference type="ChEBI" id="CHEBI:16240"/>
        <dbReference type="ChEBI" id="CHEBI:16526"/>
        <dbReference type="ChEBI" id="CHEBI:68438"/>
        <dbReference type="ChEBI" id="CHEBI:142463"/>
    </reaction>
    <physiologicalReaction direction="left-to-right" evidence="1">
        <dbReference type="Rhea" id="RHEA:57941"/>
    </physiologicalReaction>
</comment>
<comment type="catalytic activity">
    <reaction evidence="1">
        <text>harderoheme III + H2O2 + H(+) = heme b + CO2 + 2 H2O</text>
        <dbReference type="Rhea" id="RHEA:57944"/>
        <dbReference type="ChEBI" id="CHEBI:15377"/>
        <dbReference type="ChEBI" id="CHEBI:15378"/>
        <dbReference type="ChEBI" id="CHEBI:16240"/>
        <dbReference type="ChEBI" id="CHEBI:16526"/>
        <dbReference type="ChEBI" id="CHEBI:60344"/>
        <dbReference type="ChEBI" id="CHEBI:142463"/>
    </reaction>
    <physiologicalReaction direction="left-to-right" evidence="1">
        <dbReference type="Rhea" id="RHEA:57945"/>
    </physiologicalReaction>
</comment>
<comment type="cofactor">
    <cofactor evidence="1">
        <name>Fe-coproporphyrin III</name>
        <dbReference type="ChEBI" id="CHEBI:68438"/>
    </cofactor>
    <text evidence="1">Fe-coproporphyrin III acts both as a substrate and a redox cofactor.</text>
</comment>
<comment type="pathway">
    <text evidence="1">Porphyrin-containing compound metabolism; protoheme biosynthesis.</text>
</comment>
<comment type="similarity">
    <text evidence="1">Belongs to the ChdC family. Type 1 subfamily.</text>
</comment>
<accession>Q2YS77</accession>
<organism>
    <name type="scientific">Staphylococcus aureus (strain bovine RF122 / ET3-1)</name>
    <dbReference type="NCBI Taxonomy" id="273036"/>
    <lineage>
        <taxon>Bacteria</taxon>
        <taxon>Bacillati</taxon>
        <taxon>Bacillota</taxon>
        <taxon>Bacilli</taxon>
        <taxon>Bacillales</taxon>
        <taxon>Staphylococcaceae</taxon>
        <taxon>Staphylococcus</taxon>
    </lineage>
</organism>
<dbReference type="EC" id="1.3.98.5" evidence="1"/>
<dbReference type="EMBL" id="AJ938182">
    <property type="protein sequence ID" value="CAI80225.1"/>
    <property type="molecule type" value="Genomic_DNA"/>
</dbReference>
<dbReference type="RefSeq" id="WP_000075706.1">
    <property type="nucleotide sequence ID" value="NC_007622.1"/>
</dbReference>
<dbReference type="SMR" id="Q2YS77"/>
<dbReference type="BindingDB" id="Q2YS77"/>
<dbReference type="KEGG" id="sab:SAB0537c"/>
<dbReference type="HOGENOM" id="CLU_063226_1_0_9"/>
<dbReference type="UniPathway" id="UPA00252"/>
<dbReference type="GO" id="GO:0020037">
    <property type="term" value="F:heme binding"/>
    <property type="evidence" value="ECO:0007669"/>
    <property type="project" value="InterPro"/>
</dbReference>
<dbReference type="GO" id="GO:0046872">
    <property type="term" value="F:metal ion binding"/>
    <property type="evidence" value="ECO:0007669"/>
    <property type="project" value="UniProtKB-KW"/>
</dbReference>
<dbReference type="GO" id="GO:0016634">
    <property type="term" value="F:oxidoreductase activity, acting on the CH-CH group of donors, oxygen as acceptor"/>
    <property type="evidence" value="ECO:0007669"/>
    <property type="project" value="UniProtKB-UniRule"/>
</dbReference>
<dbReference type="GO" id="GO:0004601">
    <property type="term" value="F:peroxidase activity"/>
    <property type="evidence" value="ECO:0007669"/>
    <property type="project" value="InterPro"/>
</dbReference>
<dbReference type="GO" id="GO:0006785">
    <property type="term" value="P:heme B biosynthetic process"/>
    <property type="evidence" value="ECO:0007669"/>
    <property type="project" value="UniProtKB-UniRule"/>
</dbReference>
<dbReference type="Gene3D" id="3.30.70.1030">
    <property type="entry name" value="Apc35880, domain 1"/>
    <property type="match status" value="2"/>
</dbReference>
<dbReference type="HAMAP" id="MF_01442">
    <property type="entry name" value="Coproheme_decarbox_1"/>
    <property type="match status" value="1"/>
</dbReference>
<dbReference type="InterPro" id="IPR031332">
    <property type="entry name" value="CHDC"/>
</dbReference>
<dbReference type="InterPro" id="IPR010644">
    <property type="entry name" value="ChdC/CLD"/>
</dbReference>
<dbReference type="InterPro" id="IPR011008">
    <property type="entry name" value="Dimeric_a/b-barrel"/>
</dbReference>
<dbReference type="NCBIfam" id="NF008913">
    <property type="entry name" value="PRK12276.1"/>
    <property type="match status" value="1"/>
</dbReference>
<dbReference type="PANTHER" id="PTHR36843:SF1">
    <property type="entry name" value="COPROHEME DECARBOXYLASE"/>
    <property type="match status" value="1"/>
</dbReference>
<dbReference type="PANTHER" id="PTHR36843">
    <property type="entry name" value="HEME-DEPENDENT PEROXIDASE YWFI-RELATED"/>
    <property type="match status" value="1"/>
</dbReference>
<dbReference type="Pfam" id="PF06778">
    <property type="entry name" value="Chlor_dismutase"/>
    <property type="match status" value="1"/>
</dbReference>
<dbReference type="SUPFAM" id="SSF54909">
    <property type="entry name" value="Dimeric alpha+beta barrel"/>
    <property type="match status" value="1"/>
</dbReference>
<reference key="1">
    <citation type="journal article" date="2007" name="PLoS ONE">
        <title>Molecular correlates of host specialization in Staphylococcus aureus.</title>
        <authorList>
            <person name="Herron-Olson L."/>
            <person name="Fitzgerald J.R."/>
            <person name="Musser J.M."/>
            <person name="Kapur V."/>
        </authorList>
    </citation>
    <scope>NUCLEOTIDE SEQUENCE [LARGE SCALE GENOMIC DNA]</scope>
    <source>
        <strain>bovine RF122 / ET3-1</strain>
    </source>
</reference>
<keyword id="KW-0349">Heme</keyword>
<keyword id="KW-0350">Heme biosynthesis</keyword>
<keyword id="KW-0408">Iron</keyword>
<keyword id="KW-0479">Metal-binding</keyword>
<keyword id="KW-0560">Oxidoreductase</keyword>
<protein>
    <recommendedName>
        <fullName evidence="1">Coproheme decarboxylase</fullName>
        <ecNumber evidence="1">1.3.98.5</ecNumber>
    </recommendedName>
    <alternativeName>
        <fullName evidence="1">Coproheme III oxidative decarboxylase</fullName>
    </alternativeName>
    <alternativeName>
        <fullName evidence="1">Hydrogen peroxide-dependent heme synthase</fullName>
    </alternativeName>
</protein>
<gene>
    <name evidence="1" type="primary">chdC</name>
    <name type="ordered locus">SAB0537c</name>
</gene>